<name>TD2_SOLLC</name>
<proteinExistence type="evidence at protein level"/>
<gene>
    <name evidence="12" type="primary">TD2</name>
    <name evidence="11" type="synonym">TD</name>
</gene>
<keyword id="KW-0002">3D-structure</keyword>
<keyword id="KW-0028">Amino-acid biosynthesis</keyword>
<keyword id="KW-0100">Branched-chain amino acid biosynthesis</keyword>
<keyword id="KW-0150">Chloroplast</keyword>
<keyword id="KW-0903">Direct protein sequencing</keyword>
<keyword id="KW-0412">Isoleucine biosynthesis</keyword>
<keyword id="KW-0456">Lyase</keyword>
<keyword id="KW-0611">Plant defense</keyword>
<keyword id="KW-0934">Plastid</keyword>
<keyword id="KW-0663">Pyridoxal phosphate</keyword>
<keyword id="KW-1185">Reference proteome</keyword>
<keyword id="KW-0677">Repeat</keyword>
<keyword id="KW-0809">Transit peptide</keyword>
<organism>
    <name type="scientific">Solanum lycopersicum</name>
    <name type="common">Tomato</name>
    <name type="synonym">Lycopersicon esculentum</name>
    <dbReference type="NCBI Taxonomy" id="4081"/>
    <lineage>
        <taxon>Eukaryota</taxon>
        <taxon>Viridiplantae</taxon>
        <taxon>Streptophyta</taxon>
        <taxon>Embryophyta</taxon>
        <taxon>Tracheophyta</taxon>
        <taxon>Spermatophyta</taxon>
        <taxon>Magnoliopsida</taxon>
        <taxon>eudicotyledons</taxon>
        <taxon>Gunneridae</taxon>
        <taxon>Pentapetalae</taxon>
        <taxon>asterids</taxon>
        <taxon>lamiids</taxon>
        <taxon>Solanales</taxon>
        <taxon>Solanaceae</taxon>
        <taxon>Solanoideae</taxon>
        <taxon>Solaneae</taxon>
        <taxon>Solanum</taxon>
        <taxon>Solanum subgen. Lycopersicon</taxon>
    </lineage>
</organism>
<reference key="1">
    <citation type="journal article" date="1991" name="Proc. Natl. Acad. Sci. U.S.A.">
        <title>Biosynthetic threonine deaminase gene of tomato: isolation, structure, and upregulation in floral organs.</title>
        <authorList>
            <person name="Samach A."/>
            <person name="Hareven D."/>
            <person name="Gutfinger T."/>
            <person name="Ken-Dror S."/>
            <person name="Lifschitz E."/>
        </authorList>
    </citation>
    <scope>NUCLEOTIDE SEQUENCE [GENOMIC DNA]</scope>
    <scope>NUCLEOTIDE SEQUENCE [MRNA] OF 2-595</scope>
    <scope>PROTEIN SEQUENCE OF 52-61</scope>
    <scope>CATALYTIC ACTIVITY</scope>
    <scope>SUBUNIT</scope>
    <scope>TISSUE SPECIFICITY</scope>
    <source>
        <strain evidence="11">cv. Tiny tim</strain>
    </source>
</reference>
<reference key="2">
    <citation type="journal article" date="2005" name="Proc. Natl. Acad. Sci. U.S.A.">
        <title>Jasmonate-inducible plant enzymes degrade essential amino acids in the herbivore midgut.</title>
        <authorList>
            <person name="Chen H."/>
            <person name="Wilkerson C.G."/>
            <person name="Kuchar J.A."/>
            <person name="Phinney B.S."/>
            <person name="Howe G.A."/>
        </authorList>
    </citation>
    <scope>PROTEIN SEQUENCE OF 52-75; 86-120; 146-181; 188-198; 205-233; 236-310; 313-404 AND 408-418</scope>
    <scope>IDENTIFICATION BY MASS SPECTROMETRY</scope>
</reference>
<reference evidence="17" key="3">
    <citation type="journal article" date="2011" name="Proc. Natl. Acad. Sci. U.S.A.">
        <title>Adaptive evolution of threonine deaminase in plant defense against insect herbivores.</title>
        <authorList>
            <person name="Gonzales-Vigil E."/>
            <person name="Bianchetti C.M."/>
            <person name="Phillips G.N. Jr."/>
            <person name="Howe G.A."/>
        </authorList>
    </citation>
    <scope>PROTEIN SEQUENCE OF 53-75; 125-132; 139-143; 146-181; 188-198; 204-256; 283-310; 313-404 AND 408-418</scope>
    <scope>IDENTIFICATION BY MASS SPECTROMETRY</scope>
    <scope>FUNCTION</scope>
    <scope>CATALYTIC ACTIVITY</scope>
    <scope>ACTIVITY REGULATION</scope>
    <scope>BIOPHYSICOCHEMICAL PROPERTIES</scope>
    <scope>SUBUNIT</scope>
    <scope>PTM</scope>
    <scope>X-RAY CRYSTALLOGRAPHY (2.35 ANGSTROMS) OF 53-418</scope>
    <source>
        <strain evidence="12">cv. MicroTom</strain>
    </source>
</reference>
<reference key="4">
    <citation type="journal article" date="2007" name="Plant Physiol.">
        <title>Stability of plant defense proteins in the gut of insect herbivores.</title>
        <authorList>
            <person name="Chen H."/>
            <person name="Gonzales-Vigil E."/>
            <person name="Wilkerson C.G."/>
            <person name="Howe G.A."/>
        </authorList>
    </citation>
    <scope>PROTEIN SEQUENCE OF 54-75; 103-120; 146-181; 188-198; 204-233; 246-256; 260-282; 313-404 AND 408-418</scope>
    <scope>IDENTIFICATION BY MASS SPECTROMETRY</scope>
    <scope>FUNCTION</scope>
    <scope>CATALYTIC ACTIVITY</scope>
    <scope>ACTIVITY REGULATION</scope>
    <scope>BIOPHYSICOCHEMICAL PROPERTIES</scope>
    <scope>TISSUE SPECIFICITY</scope>
    <scope>INDUCTION</scope>
    <scope>PTM</scope>
    <source>
        <strain evidence="10">cv. Castlemart</strain>
    </source>
</reference>
<reference key="5">
    <citation type="journal article" date="1995" name="Plant J.">
        <title>Expression of an amino acid biosynthesis gene in tomato flowers: developmental upregulation and MeJa response are parenchyma-specific and mutually compatible.</title>
        <authorList>
            <person name="Samach A."/>
            <person name="Broday L."/>
            <person name="Hareven D."/>
            <person name="Lifschitz E."/>
        </authorList>
    </citation>
    <scope>TISSUE SPECIFICITY</scope>
    <scope>DEVELOPMENTAL STAGE</scope>
    <scope>INDUCTION</scope>
</reference>
<reference key="6">
    <citation type="journal article" date="2012" name="J. Chem. Ecol.">
        <title>Caterpillar labial saliva alters tomato plant gene expression.</title>
        <authorList>
            <person name="Musser R.O."/>
            <person name="Hum-Musser S.M."/>
            <person name="Lee H.K."/>
            <person name="DesRochers B.L."/>
            <person name="Williams S.A."/>
            <person name="Vogel H."/>
        </authorList>
    </citation>
    <scope>INDUCTION</scope>
</reference>
<evidence type="ECO:0000250" key="1">
    <source>
        <dbReference type="UniProtKB" id="P04968"/>
    </source>
</evidence>
<evidence type="ECO:0000255" key="2"/>
<evidence type="ECO:0000255" key="3">
    <source>
        <dbReference type="PROSITE-ProRule" id="PRU01008"/>
    </source>
</evidence>
<evidence type="ECO:0000269" key="4">
    <source>
    </source>
</evidence>
<evidence type="ECO:0000269" key="5">
    <source>
    </source>
</evidence>
<evidence type="ECO:0000269" key="6">
    <source>
    </source>
</evidence>
<evidence type="ECO:0000269" key="7">
    <source>
    </source>
</evidence>
<evidence type="ECO:0000269" key="8">
    <source>
    </source>
</evidence>
<evidence type="ECO:0000269" key="9">
    <source>
    </source>
</evidence>
<evidence type="ECO:0000303" key="10">
    <source>
    </source>
</evidence>
<evidence type="ECO:0000303" key="11">
    <source>
    </source>
</evidence>
<evidence type="ECO:0000303" key="12">
    <source>
    </source>
</evidence>
<evidence type="ECO:0000305" key="13"/>
<evidence type="ECO:0000305" key="14">
    <source>
    </source>
</evidence>
<evidence type="ECO:0000305" key="15">
    <source>
    </source>
</evidence>
<evidence type="ECO:0000305" key="16">
    <source>
    </source>
</evidence>
<evidence type="ECO:0007744" key="17">
    <source>
        <dbReference type="PDB" id="3IAU"/>
    </source>
</evidence>
<evidence type="ECO:0007829" key="18">
    <source>
        <dbReference type="PDB" id="3IAU"/>
    </source>
</evidence>
<protein>
    <recommendedName>
        <fullName evidence="13">Threonine dehydratase 2 biosynthetic, chloroplastic</fullName>
        <ecNumber evidence="5">4.3.1.17</ecNumber>
        <ecNumber evidence="5 6 7">4.3.1.19</ecNumber>
    </recommendedName>
    <alternativeName>
        <fullName evidence="10">SlTD2</fullName>
    </alternativeName>
    <alternativeName>
        <fullName evidence="12">Threonine deaminase 2</fullName>
    </alternativeName>
    <component>
        <recommendedName>
            <fullName evidence="13">Processed threonine dehydratase 2</fullName>
        </recommendedName>
        <alternativeName>
            <fullName evidence="10">Processed TD2</fullName>
            <shortName evidence="10 12">pTD2</shortName>
        </alternativeName>
    </component>
</protein>
<dbReference type="EC" id="4.3.1.17" evidence="5"/>
<dbReference type="EC" id="4.3.1.19" evidence="5 6 7"/>
<dbReference type="EMBL" id="M61914">
    <property type="protein sequence ID" value="AAA34171.1"/>
    <property type="molecule type" value="mRNA"/>
</dbReference>
<dbReference type="EMBL" id="M61915">
    <property type="protein sequence ID" value="AAA68097.1"/>
    <property type="molecule type" value="Genomic_DNA"/>
</dbReference>
<dbReference type="PIR" id="A38628">
    <property type="entry name" value="A38628"/>
</dbReference>
<dbReference type="RefSeq" id="NP_001296095.1">
    <property type="nucleotide sequence ID" value="NM_001309166.1"/>
</dbReference>
<dbReference type="PDB" id="3IAU">
    <property type="method" value="X-ray"/>
    <property type="resolution" value="2.35 A"/>
    <property type="chains" value="A/B=53-418"/>
</dbReference>
<dbReference type="PDBsum" id="3IAU"/>
<dbReference type="SMR" id="P25306"/>
<dbReference type="DIP" id="DIP-59625N"/>
<dbReference type="STRING" id="4081.P25306"/>
<dbReference type="PaxDb" id="4081-Solyc09g008670.2.1"/>
<dbReference type="EnsemblPlants" id="Solyc09g008670.3.1">
    <property type="protein sequence ID" value="Solyc09g008670.3.1"/>
    <property type="gene ID" value="Solyc09g008670.3"/>
</dbReference>
<dbReference type="GeneID" id="543983"/>
<dbReference type="Gramene" id="Solyc09g008670.3.1">
    <property type="protein sequence ID" value="Solyc09g008670.3.1"/>
    <property type="gene ID" value="Solyc09g008670.3"/>
</dbReference>
<dbReference type="KEGG" id="sly:543983"/>
<dbReference type="eggNOG" id="KOG1250">
    <property type="taxonomic scope" value="Eukaryota"/>
</dbReference>
<dbReference type="HOGENOM" id="CLU_021152_6_3_1"/>
<dbReference type="InParanoid" id="P25306"/>
<dbReference type="OMA" id="GTEINRQ"/>
<dbReference type="OrthoDB" id="4418812at2759"/>
<dbReference type="PhylomeDB" id="P25306"/>
<dbReference type="BRENDA" id="4.3.1.19">
    <property type="organism ID" value="3101"/>
</dbReference>
<dbReference type="UniPathway" id="UPA00047">
    <property type="reaction ID" value="UER00054"/>
</dbReference>
<dbReference type="EvolutionaryTrace" id="P25306"/>
<dbReference type="Proteomes" id="UP000004994">
    <property type="component" value="Chromosome 9"/>
</dbReference>
<dbReference type="ExpressionAtlas" id="P25306">
    <property type="expression patterns" value="baseline and differential"/>
</dbReference>
<dbReference type="GO" id="GO:0009507">
    <property type="term" value="C:chloroplast"/>
    <property type="evidence" value="ECO:0007669"/>
    <property type="project" value="UniProtKB-SubCell"/>
</dbReference>
<dbReference type="GO" id="GO:0042802">
    <property type="term" value="F:identical protein binding"/>
    <property type="evidence" value="ECO:0000353"/>
    <property type="project" value="IntAct"/>
</dbReference>
<dbReference type="GO" id="GO:0003941">
    <property type="term" value="F:L-serine ammonia-lyase activity"/>
    <property type="evidence" value="ECO:0000314"/>
    <property type="project" value="UniProtKB"/>
</dbReference>
<dbReference type="GO" id="GO:0030170">
    <property type="term" value="F:pyridoxal phosphate binding"/>
    <property type="evidence" value="ECO:0000250"/>
    <property type="project" value="UniProtKB"/>
</dbReference>
<dbReference type="GO" id="GO:0004794">
    <property type="term" value="F:threonine deaminase activity"/>
    <property type="evidence" value="ECO:0000314"/>
    <property type="project" value="UniProtKB"/>
</dbReference>
<dbReference type="GO" id="GO:0002213">
    <property type="term" value="P:defense response to insect"/>
    <property type="evidence" value="ECO:0000314"/>
    <property type="project" value="UniProtKB"/>
</dbReference>
<dbReference type="GO" id="GO:0009097">
    <property type="term" value="P:isoleucine biosynthetic process"/>
    <property type="evidence" value="ECO:0000314"/>
    <property type="project" value="UniProtKB"/>
</dbReference>
<dbReference type="GO" id="GO:0006565">
    <property type="term" value="P:L-serine catabolic process"/>
    <property type="evidence" value="ECO:0000314"/>
    <property type="project" value="UniProtKB"/>
</dbReference>
<dbReference type="GO" id="GO:0031349">
    <property type="term" value="P:positive regulation of defense response"/>
    <property type="evidence" value="ECO:0000314"/>
    <property type="project" value="UniProtKB"/>
</dbReference>
<dbReference type="GO" id="GO:0051289">
    <property type="term" value="P:protein homotetramerization"/>
    <property type="evidence" value="ECO:0000314"/>
    <property type="project" value="UniProtKB"/>
</dbReference>
<dbReference type="GO" id="GO:0080027">
    <property type="term" value="P:response to herbivore"/>
    <property type="evidence" value="ECO:0000314"/>
    <property type="project" value="UniProtKB"/>
</dbReference>
<dbReference type="GO" id="GO:0009625">
    <property type="term" value="P:response to insect"/>
    <property type="evidence" value="ECO:0000314"/>
    <property type="project" value="UniProtKB"/>
</dbReference>
<dbReference type="GO" id="GO:0006567">
    <property type="term" value="P:threonine catabolic process"/>
    <property type="evidence" value="ECO:0000314"/>
    <property type="project" value="UniProtKB"/>
</dbReference>
<dbReference type="CDD" id="cd04907">
    <property type="entry name" value="ACT_ThrD-I_2"/>
    <property type="match status" value="1"/>
</dbReference>
<dbReference type="CDD" id="cd01562">
    <property type="entry name" value="Thr-dehyd"/>
    <property type="match status" value="1"/>
</dbReference>
<dbReference type="FunFam" id="3.40.1020.10:FF:000003">
    <property type="entry name" value="Threonine dehydratase"/>
    <property type="match status" value="1"/>
</dbReference>
<dbReference type="FunFam" id="3.40.50.1100:FF:000005">
    <property type="entry name" value="Threonine dehydratase catabolic"/>
    <property type="match status" value="1"/>
</dbReference>
<dbReference type="Gene3D" id="3.40.50.1100">
    <property type="match status" value="2"/>
</dbReference>
<dbReference type="Gene3D" id="3.40.1020.10">
    <property type="entry name" value="Biosynthetic Threonine Deaminase, Domain 3"/>
    <property type="match status" value="1"/>
</dbReference>
<dbReference type="InterPro" id="IPR045865">
    <property type="entry name" value="ACT-like_dom_sf"/>
</dbReference>
<dbReference type="InterPro" id="IPR050147">
    <property type="entry name" value="Ser/Thr_Dehydratase"/>
</dbReference>
<dbReference type="InterPro" id="IPR000634">
    <property type="entry name" value="Ser/Thr_deHydtase_PyrdxlP-BS"/>
</dbReference>
<dbReference type="InterPro" id="IPR001721">
    <property type="entry name" value="TD_ACT-like"/>
</dbReference>
<dbReference type="InterPro" id="IPR038110">
    <property type="entry name" value="TD_ACT-like_sf"/>
</dbReference>
<dbReference type="InterPro" id="IPR005787">
    <property type="entry name" value="Thr_deHydtase_biosynth"/>
</dbReference>
<dbReference type="InterPro" id="IPR001926">
    <property type="entry name" value="TrpB-like_PALP"/>
</dbReference>
<dbReference type="InterPro" id="IPR036052">
    <property type="entry name" value="TrpB-like_PALP_sf"/>
</dbReference>
<dbReference type="NCBIfam" id="TIGR01124">
    <property type="entry name" value="ilvA_2Cterm"/>
    <property type="match status" value="1"/>
</dbReference>
<dbReference type="NCBIfam" id="NF006674">
    <property type="entry name" value="PRK09224.1"/>
    <property type="match status" value="1"/>
</dbReference>
<dbReference type="PANTHER" id="PTHR48078:SF10">
    <property type="entry name" value="THREONINE DEHYDRATASE 2 BIOSYNTHETIC, CHLOROPLASTIC"/>
    <property type="match status" value="1"/>
</dbReference>
<dbReference type="PANTHER" id="PTHR48078">
    <property type="entry name" value="THREONINE DEHYDRATASE, MITOCHONDRIAL-RELATED"/>
    <property type="match status" value="1"/>
</dbReference>
<dbReference type="Pfam" id="PF00291">
    <property type="entry name" value="PALP"/>
    <property type="match status" value="1"/>
</dbReference>
<dbReference type="Pfam" id="PF00585">
    <property type="entry name" value="Thr_dehydrat_C"/>
    <property type="match status" value="2"/>
</dbReference>
<dbReference type="SUPFAM" id="SSF55021">
    <property type="entry name" value="ACT-like"/>
    <property type="match status" value="2"/>
</dbReference>
<dbReference type="SUPFAM" id="SSF53686">
    <property type="entry name" value="Tryptophan synthase beta subunit-like PLP-dependent enzymes"/>
    <property type="match status" value="1"/>
</dbReference>
<dbReference type="PROSITE" id="PS51672">
    <property type="entry name" value="ACT_LIKE"/>
    <property type="match status" value="2"/>
</dbReference>
<dbReference type="PROSITE" id="PS00165">
    <property type="entry name" value="DEHYDRATASE_SER_THR"/>
    <property type="match status" value="1"/>
</dbReference>
<comment type="function">
    <molecule>Threonine dehydratase 2 biosynthetic, chloroplastic</molecule>
    <text evidence="7">Not required for normal growth and development of the plant (PubMed:21436043).</text>
</comment>
<comment type="function">
    <molecule>Processed threonine dehydratase 2</molecule>
    <text evidence="5 7 13">Involved in defense against lepidopteran, but not coleopteran herbivore insects (PubMed:17416643, PubMed:21436043). Acts in the insect gut to degrade threonine, which is an essential and limiting nutrient for the growth of lepidopteran larvae (Probable). Active against both L-threonine and L-serine (PubMed:17416643).</text>
</comment>
<comment type="catalytic activity">
    <reaction evidence="5 6 7">
        <text>L-threonine = 2-oxobutanoate + NH4(+)</text>
        <dbReference type="Rhea" id="RHEA:22108"/>
        <dbReference type="ChEBI" id="CHEBI:16763"/>
        <dbReference type="ChEBI" id="CHEBI:28938"/>
        <dbReference type="ChEBI" id="CHEBI:57926"/>
        <dbReference type="EC" id="4.3.1.19"/>
    </reaction>
</comment>
<comment type="catalytic activity">
    <reaction evidence="5">
        <text>L-serine = pyruvate + NH4(+)</text>
        <dbReference type="Rhea" id="RHEA:19169"/>
        <dbReference type="ChEBI" id="CHEBI:15361"/>
        <dbReference type="ChEBI" id="CHEBI:28938"/>
        <dbReference type="ChEBI" id="CHEBI:33384"/>
        <dbReference type="EC" id="4.3.1.17"/>
    </reaction>
</comment>
<comment type="cofactor">
    <cofactor evidence="1">
        <name>pyridoxal 5'-phosphate</name>
        <dbReference type="ChEBI" id="CHEBI:597326"/>
    </cofactor>
</comment>
<comment type="activity regulation">
    <text evidence="5 7">Threonine dehydratase 2 biosynthetic, chloroplastic: Strongly inhibited by 1 mM isoleucine (PubMed:21436043). Processed threonine dehydratase 2: Not inhibited by isoleucine (PubMed:17416643, PubMed:21436043).</text>
</comment>
<comment type="biophysicochemical properties">
    <phDependence>
        <text evidence="5 7">Threonine dehydratase 2 biosynthetic, chloroplastic: Active at alkaline pH (PubMed:17416643, PubMed:21436043). Processed threonine dehydratase 2: Optimum pH is 9. Has little or no activity at pH values below 6.0 (PubMed:17416643).</text>
    </phDependence>
    <temperatureDependence>
        <text evidence="5 7">Threonine dehydratase 2 biosynthetic, chloroplastic: Optimum temperature is 60 degrees Celsius. Abnormally stable at elevated temperatures (PubMed:21436043). Processed threonine dehydratase 2: Active over a wide range of temperatures. Optimal enzyme activity against L-threonine is at 58 degrees Celsius (PubMed:17416643).</text>
    </temperatureDependence>
</comment>
<comment type="pathway">
    <text>Amino-acid biosynthesis; L-isoleucine biosynthesis; 2-oxobutanoate from L-threonine: step 1/1.</text>
</comment>
<comment type="subunit">
    <text evidence="6 7">Homotetramer.</text>
</comment>
<comment type="interaction">
    <interactant intactId="EBI-15916506">
        <id>P25306</id>
    </interactant>
    <interactant intactId="EBI-15916506">
        <id>P25306</id>
        <label>TD2</label>
    </interactant>
    <organismsDiffer>false</organismsDiffer>
    <experiments>2</experiments>
</comment>
<comment type="subcellular location">
    <subcellularLocation>
        <location evidence="2">Plastid</location>
        <location evidence="2">Chloroplast</location>
    </subcellularLocation>
</comment>
<comment type="tissue specificity">
    <text evidence="5 6 9">Expressed in floral buds, 8-9 mm long flowers 1 to 2 days before anthesis, open flowers and floral organs including sepals, petals, stamens and carpels of 8-9 mm flowers (at protein level) (PubMed:7550377). Expressed in very early floral meristems of the anantha. Over 500-fold expression in mature flowers compared to leaves (PubMed:2011578). Expressed in sepals, petals, stamens and carpels of the mature flower. In sepals, mostly expressed in the abaxial mesophyll cells and in petals in parenchymal cells. Not expressed in epidermal or vascular tissues of sepals and petals. In stamens, expressed in parenchymal cells of the connective and lobes, but not expressed in differentiated tissues such as tapetum (TP), stomium (SM), or pollen grains (PG) (PubMed:2011578, PubMed:7550377). Not expressed in roots or seeds (PubMed:2011578). High level of expression in immature flower buds, unopened flowers and opened flowers (PubMed:17416643, PubMed:7550377). Not expressed in unstressed leaves, root, stem or petiole (PubMed:17416643).</text>
</comment>
<comment type="developmental stage">
    <text evidence="9">During the pre-organogenesis stage of the floral primordium, expressed in scattered islands of cells in the central parenchymatous pith region and in the peripheral ground parenchyma. Upon sepal buttresses emergence, expressed in all parenchyma mesophyll cells accumulating in a continous pattern in the central pith cells of the floral primordia, but not expressed in the future epidermal cells. As the mesophyll and vascular tissues elongate and differentiate, highly expressed in the abaxial mesophyll cells of sepals, but down-regulated in the adaxial cell layers. At anthesis, down-regulated expression in all mesophyll cells of the sepal. In petals, expressed in all mesophyll cells throughout development.</text>
</comment>
<comment type="induction">
    <text evidence="5 8 9">Expression is induced in response to methyl jasmonate (MeJA) and locally and systemically in response to mechanical wounding (PubMed:17416643). Parenchyma-specific induction of expression in flowers and leaves by MeJA. No induction of expression by MeJA in epidermal, vascular or sporogenous tissues (PubMed:7550377). Caterpillar (Helicoverpa zea) labial saliva induces expression in leaves damaged by herbivory (PubMed:23065106).</text>
</comment>
<comment type="PTM">
    <text evidence="5 7">Proteolytically cleaved by a chymotrypsin-like digestive protease in the midgut of the lepidopteran insects to remove the C-terminal regulatory domain, which allows efficient metabolizing of threonine in the presence of high isoleucine levels in the gut.</text>
</comment>
<comment type="similarity">
    <text evidence="13">Belongs to the serine/threonine dehydratase family.</text>
</comment>
<accession>P25306</accession>
<feature type="transit peptide" description="Chloroplast" evidence="4 6">
    <location>
        <begin position="1"/>
        <end position="51"/>
    </location>
</feature>
<feature type="chain" id="PRO_0000033614" description="Threonine dehydratase 2 biosynthetic, chloroplastic" evidence="14 16">
    <location>
        <begin position="52"/>
        <end position="595"/>
    </location>
</feature>
<feature type="chain" id="PRO_0000445516" description="Processed threonine dehydratase 2" evidence="15">
    <location>
        <begin position="52"/>
        <end position="415"/>
    </location>
</feature>
<feature type="domain" description="ACT-like 1" evidence="3">
    <location>
        <begin position="420"/>
        <end position="492"/>
    </location>
</feature>
<feature type="domain" description="ACT-like 2" evidence="3">
    <location>
        <begin position="514"/>
        <end position="585"/>
    </location>
</feature>
<feature type="modified residue" description="N6-(pyridoxal phosphate)lysine" evidence="1">
    <location>
        <position position="143"/>
    </location>
</feature>
<feature type="helix" evidence="18">
    <location>
        <begin position="70"/>
        <end position="72"/>
    </location>
</feature>
<feature type="helix" evidence="18">
    <location>
        <begin position="91"/>
        <end position="103"/>
    </location>
</feature>
<feature type="helix" evidence="18">
    <location>
        <begin position="106"/>
        <end position="108"/>
    </location>
</feature>
<feature type="strand" evidence="18">
    <location>
        <begin position="115"/>
        <end position="117"/>
    </location>
</feature>
<feature type="helix" evidence="18">
    <location>
        <begin position="119"/>
        <end position="125"/>
    </location>
</feature>
<feature type="strand" evidence="18">
    <location>
        <begin position="127"/>
        <end position="133"/>
    </location>
</feature>
<feature type="helix" evidence="18">
    <location>
        <begin position="134"/>
        <end position="136"/>
    </location>
</feature>
<feature type="helix" evidence="18">
    <location>
        <begin position="145"/>
        <end position="152"/>
    </location>
</feature>
<feature type="helix" evidence="18">
    <location>
        <begin position="156"/>
        <end position="161"/>
    </location>
</feature>
<feature type="strand" evidence="18">
    <location>
        <begin position="163"/>
        <end position="166"/>
    </location>
</feature>
<feature type="helix" evidence="18">
    <location>
        <begin position="170"/>
        <end position="181"/>
    </location>
</feature>
<feature type="strand" evidence="18">
    <location>
        <begin position="186"/>
        <end position="190"/>
    </location>
</feature>
<feature type="helix" evidence="18">
    <location>
        <begin position="196"/>
        <end position="204"/>
    </location>
</feature>
<feature type="strand" evidence="18">
    <location>
        <begin position="208"/>
        <end position="211"/>
    </location>
</feature>
<feature type="helix" evidence="18">
    <location>
        <begin position="216"/>
        <end position="230"/>
    </location>
</feature>
<feature type="strand" evidence="18">
    <location>
        <begin position="237"/>
        <end position="240"/>
    </location>
</feature>
<feature type="helix" evidence="18">
    <location>
        <begin position="241"/>
        <end position="257"/>
    </location>
</feature>
<feature type="strand" evidence="18">
    <location>
        <begin position="260"/>
        <end position="267"/>
    </location>
</feature>
<feature type="strand" evidence="18">
    <location>
        <begin position="269"/>
        <end position="271"/>
    </location>
</feature>
<feature type="helix" evidence="18">
    <location>
        <begin position="272"/>
        <end position="284"/>
    </location>
</feature>
<feature type="strand" evidence="18">
    <location>
        <begin position="288"/>
        <end position="295"/>
    </location>
</feature>
<feature type="helix" evidence="18">
    <location>
        <begin position="296"/>
        <end position="298"/>
    </location>
</feature>
<feature type="helix" evidence="18">
    <location>
        <begin position="300"/>
        <end position="307"/>
    </location>
</feature>
<feature type="strand" evidence="18">
    <location>
        <begin position="312"/>
        <end position="314"/>
    </location>
</feature>
<feature type="helix" evidence="18">
    <location>
        <begin position="321"/>
        <end position="323"/>
    </location>
</feature>
<feature type="helix" evidence="18">
    <location>
        <begin position="330"/>
        <end position="339"/>
    </location>
</feature>
<feature type="strand" evidence="18">
    <location>
        <begin position="342"/>
        <end position="346"/>
    </location>
</feature>
<feature type="helix" evidence="18">
    <location>
        <begin position="348"/>
        <end position="362"/>
    </location>
</feature>
<feature type="helix" evidence="18">
    <location>
        <begin position="368"/>
        <end position="383"/>
    </location>
</feature>
<feature type="strand" evidence="18">
    <location>
        <begin position="390"/>
        <end position="395"/>
    </location>
</feature>
<feature type="helix" evidence="18">
    <location>
        <begin position="402"/>
        <end position="404"/>
    </location>
</feature>
<feature type="helix" evidence="18">
    <location>
        <begin position="405"/>
        <end position="412"/>
    </location>
</feature>
<sequence length="595" mass="64937">MEFLCLAPTRSFSTNPKLTKSIPSDHTSTTSRIFTYQNMRGSTMRPLALPLKMSPIVSVPDITAPVENVPAILPKVVPGELIVNKPTGGDSDELFQYLVDILASPVYDVAIESPLELAEKLSDRLGVNFYIKREDKQRVFSFKLRGAYNMMSNLSREELDKGVITASAGNHAQGVALAGQRLNCVAKIVMPTTTPQIKIDAVRALGGDVVLYGKTFDEAQTHALELSEKDGLKYIPPFDDPGVIKGQGTIGTEINRQLKDIHAVFIPVGGGGLIAGVATFFKQIAPNTKIIGVEPYGAASMTLSLHEGHRVKLSNVDTFADGVAVALVGEYTFAKCQELIDGMVLVANDGISAAIKDVYDEGRNILETSGAVAIAGAAAYCEFYKIKNENIVAIASGANMDFSKLHKVTELAGLGSGKEALLATFMVEQQGSFKTFVGLVGSLNFTELTYRFTSERKNALILYRVNVDKESDLEKMIEDMKSSNMTTLNLSHNELVVDHLKHLVGGSANISDEIFGEFIVPEKAETLKTFLDAFSPRWNITLCRYRNQGDINASLLMGFQVPQAEMDEFKNQADKLGYPYELDNYNEAFNLVVSE</sequence>